<protein>
    <recommendedName>
        <fullName>Squamosa promoter-binding-like protein 2</fullName>
    </recommendedName>
</protein>
<comment type="function">
    <text>Trans-acting factor that binds specifically to the consensus nucleotide sequence 5'-TNCGTACAA-3'.</text>
</comment>
<comment type="cofactor">
    <cofactor evidence="1">
        <name>Zn(2+)</name>
        <dbReference type="ChEBI" id="CHEBI:29105"/>
    </cofactor>
    <text evidence="1">Binds 2 Zn(2+) ions per subunit.</text>
</comment>
<comment type="subcellular location">
    <subcellularLocation>
        <location evidence="9">Nucleus</location>
    </subcellularLocation>
</comment>
<comment type="developmental stage">
    <text evidence="5 8">Expressed constitutively during plant development, weak increase during flowering.</text>
</comment>
<comment type="induction">
    <text evidence="6 7 9">Negatively regulated by microRNAs miR156 and miR157 (Probable). Up-regulated by Turnip mosaic virus P1/HC-Pro protein, that acts as an antagonist of miR156.</text>
</comment>
<comment type="domain">
    <text evidence="1">The SBP-type zinc finger is required for the binding to DNA.</text>
</comment>
<proteinExistence type="evidence at transcript level"/>
<dbReference type="EMBL" id="AJ011624">
    <property type="protein sequence ID" value="CAB56576.1"/>
    <property type="molecule type" value="Genomic_DNA"/>
</dbReference>
<dbReference type="EMBL" id="AJ011625">
    <property type="protein sequence ID" value="CAB56577.1"/>
    <property type="molecule type" value="mRNA"/>
</dbReference>
<dbReference type="EMBL" id="AJ011626">
    <property type="protein sequence ID" value="CAB56578.1"/>
    <property type="molecule type" value="mRNA"/>
</dbReference>
<dbReference type="EMBL" id="AB017070">
    <property type="protein sequence ID" value="BAB10590.1"/>
    <property type="molecule type" value="Genomic_DNA"/>
</dbReference>
<dbReference type="EMBL" id="CP002688">
    <property type="protein sequence ID" value="AED94933.1"/>
    <property type="molecule type" value="Genomic_DNA"/>
</dbReference>
<dbReference type="EMBL" id="CP002688">
    <property type="protein sequence ID" value="AED94934.1"/>
    <property type="molecule type" value="Genomic_DNA"/>
</dbReference>
<dbReference type="EMBL" id="CP002688">
    <property type="protein sequence ID" value="AED94935.1"/>
    <property type="molecule type" value="Genomic_DNA"/>
</dbReference>
<dbReference type="EMBL" id="BT025984">
    <property type="protein sequence ID" value="ABG25073.1"/>
    <property type="molecule type" value="mRNA"/>
</dbReference>
<dbReference type="EMBL" id="AK230160">
    <property type="protein sequence ID" value="BAF01969.1"/>
    <property type="molecule type" value="mRNA"/>
</dbReference>
<dbReference type="PIR" id="T52603">
    <property type="entry name" value="T52603"/>
</dbReference>
<dbReference type="PIR" id="T52604">
    <property type="entry name" value="T52604"/>
</dbReference>
<dbReference type="RefSeq" id="NP_199141.1">
    <property type="nucleotide sequence ID" value="NM_123693.6"/>
</dbReference>
<dbReference type="RefSeq" id="NP_851122.1">
    <property type="nucleotide sequence ID" value="NM_180791.3"/>
</dbReference>
<dbReference type="RefSeq" id="NP_974875.1">
    <property type="nucleotide sequence ID" value="NM_203146.4"/>
</dbReference>
<dbReference type="SMR" id="Q9S840"/>
<dbReference type="FunCoup" id="Q9S840">
    <property type="interactions" value="463"/>
</dbReference>
<dbReference type="STRING" id="3702.Q9S840"/>
<dbReference type="GlyGen" id="Q9S840">
    <property type="glycosylation" value="2 sites, 1 O-linked glycan (2 sites)"/>
</dbReference>
<dbReference type="PaxDb" id="3702-AT5G43270.1"/>
<dbReference type="ProteomicsDB" id="245200"/>
<dbReference type="EnsemblPlants" id="AT5G43270.1">
    <property type="protein sequence ID" value="AT5G43270.1"/>
    <property type="gene ID" value="AT5G43270"/>
</dbReference>
<dbReference type="EnsemblPlants" id="AT5G43270.2">
    <property type="protein sequence ID" value="AT5G43270.2"/>
    <property type="gene ID" value="AT5G43270"/>
</dbReference>
<dbReference type="EnsemblPlants" id="AT5G43270.3">
    <property type="protein sequence ID" value="AT5G43270.3"/>
    <property type="gene ID" value="AT5G43270"/>
</dbReference>
<dbReference type="GeneID" id="834345"/>
<dbReference type="Gramene" id="AT5G43270.1">
    <property type="protein sequence ID" value="AT5G43270.1"/>
    <property type="gene ID" value="AT5G43270"/>
</dbReference>
<dbReference type="Gramene" id="AT5G43270.2">
    <property type="protein sequence ID" value="AT5G43270.2"/>
    <property type="gene ID" value="AT5G43270"/>
</dbReference>
<dbReference type="Gramene" id="AT5G43270.3">
    <property type="protein sequence ID" value="AT5G43270.3"/>
    <property type="gene ID" value="AT5G43270"/>
</dbReference>
<dbReference type="KEGG" id="ath:AT5G43270"/>
<dbReference type="Araport" id="AT5G43270"/>
<dbReference type="TAIR" id="AT5G43270">
    <property type="gene designation" value="SPL2"/>
</dbReference>
<dbReference type="eggNOG" id="ENOG502QPVZ">
    <property type="taxonomic scope" value="Eukaryota"/>
</dbReference>
<dbReference type="HOGENOM" id="CLU_026055_1_0_1"/>
<dbReference type="InParanoid" id="Q9S840"/>
<dbReference type="OMA" id="MEWEIDG"/>
<dbReference type="OrthoDB" id="514967at2759"/>
<dbReference type="PhylomeDB" id="Q9S840"/>
<dbReference type="PRO" id="PR:Q9S840"/>
<dbReference type="Proteomes" id="UP000006548">
    <property type="component" value="Chromosome 5"/>
</dbReference>
<dbReference type="ExpressionAtlas" id="Q9S840">
    <property type="expression patterns" value="baseline and differential"/>
</dbReference>
<dbReference type="GO" id="GO:0005634">
    <property type="term" value="C:nucleus"/>
    <property type="evidence" value="ECO:0007669"/>
    <property type="project" value="UniProtKB-SubCell"/>
</dbReference>
<dbReference type="GO" id="GO:0003700">
    <property type="term" value="F:DNA-binding transcription factor activity"/>
    <property type="evidence" value="ECO:0000250"/>
    <property type="project" value="TAIR"/>
</dbReference>
<dbReference type="GO" id="GO:0000976">
    <property type="term" value="F:transcription cis-regulatory region binding"/>
    <property type="evidence" value="ECO:0000353"/>
    <property type="project" value="TAIR"/>
</dbReference>
<dbReference type="GO" id="GO:0008270">
    <property type="term" value="F:zinc ion binding"/>
    <property type="evidence" value="ECO:0007669"/>
    <property type="project" value="UniProtKB-KW"/>
</dbReference>
<dbReference type="GO" id="GO:0048653">
    <property type="term" value="P:anther development"/>
    <property type="evidence" value="ECO:0000316"/>
    <property type="project" value="TAIR"/>
</dbReference>
<dbReference type="GO" id="GO:0090356">
    <property type="term" value="P:negative regulation of auxin metabolic process"/>
    <property type="evidence" value="ECO:0000315"/>
    <property type="project" value="TAIR"/>
</dbReference>
<dbReference type="GO" id="GO:0006355">
    <property type="term" value="P:regulation of DNA-templated transcription"/>
    <property type="evidence" value="ECO:0000304"/>
    <property type="project" value="TAIR"/>
</dbReference>
<dbReference type="GO" id="GO:0048510">
    <property type="term" value="P:regulation of timing of transition from vegetative to reproductive phase"/>
    <property type="evidence" value="ECO:0000315"/>
    <property type="project" value="TAIR"/>
</dbReference>
<dbReference type="FunFam" id="4.10.1100.10:FF:000001">
    <property type="entry name" value="Squamosa promoter-binding-like protein 14"/>
    <property type="match status" value="1"/>
</dbReference>
<dbReference type="Gene3D" id="4.10.1100.10">
    <property type="entry name" value="Transcription factor, SBP-box domain"/>
    <property type="match status" value="1"/>
</dbReference>
<dbReference type="InterPro" id="IPR044817">
    <property type="entry name" value="SBP-like"/>
</dbReference>
<dbReference type="InterPro" id="IPR004333">
    <property type="entry name" value="SBP_dom"/>
</dbReference>
<dbReference type="InterPro" id="IPR036893">
    <property type="entry name" value="SBP_sf"/>
</dbReference>
<dbReference type="PANTHER" id="PTHR31251:SF74">
    <property type="entry name" value="SQUAMOSA PROMOTER-BINDING-LIKE PROTEIN 2"/>
    <property type="match status" value="1"/>
</dbReference>
<dbReference type="PANTHER" id="PTHR31251">
    <property type="entry name" value="SQUAMOSA PROMOTER-BINDING-LIKE PROTEIN 4"/>
    <property type="match status" value="1"/>
</dbReference>
<dbReference type="Pfam" id="PF03110">
    <property type="entry name" value="SBP"/>
    <property type="match status" value="1"/>
</dbReference>
<dbReference type="SUPFAM" id="SSF103612">
    <property type="entry name" value="SBT domain"/>
    <property type="match status" value="1"/>
</dbReference>
<dbReference type="PROSITE" id="PS51141">
    <property type="entry name" value="ZF_SBP"/>
    <property type="match status" value="1"/>
</dbReference>
<gene>
    <name type="primary">SPL2</name>
    <name type="ordered locus">At5g43270</name>
    <name type="ORF">MNL12.9</name>
</gene>
<evidence type="ECO:0000250" key="1"/>
<evidence type="ECO:0000255" key="2"/>
<evidence type="ECO:0000255" key="3">
    <source>
        <dbReference type="PROSITE-ProRule" id="PRU00470"/>
    </source>
</evidence>
<evidence type="ECO:0000256" key="4">
    <source>
        <dbReference type="SAM" id="MobiDB-lite"/>
    </source>
</evidence>
<evidence type="ECO:0000269" key="5">
    <source>
    </source>
</evidence>
<evidence type="ECO:0000269" key="6">
    <source>
    </source>
</evidence>
<evidence type="ECO:0000269" key="7">
    <source>
    </source>
</evidence>
<evidence type="ECO:0000269" key="8">
    <source>
    </source>
</evidence>
<evidence type="ECO:0000305" key="9"/>
<sequence>MECNAKPPFQWELENLISFGTSTAEVPRKLKPMEWEIDGFDCTSLYSSSFAYAGSSGSDIAHAFSKSSKSTSISSSSAEVRTHNFTSETGESLPGEFAKGIDTSPSLELSFGSGDPVLGLKLGKRTYFEDFWEVENAKGLGLPVTLASSSVSPVKKSKSIPQRLQTPHCQVEGCNLDLSSAKDYHRKHRICENHSKFPKVVVSGVERRFCQQCSRFHCLSEFDEKKRSCRRRLSDHNARRRKPNPGRTYDGKPQVDFVWNRFALIHPRSEEKFIWPSSKHVPSRVLMPQPAKTEISDTEHNRFGLLDPKTKTARAELFSKEKVTISSHMGASQDLDGALSLLSNSTTWVSSSDQPRRFTLDHHPSSNLQPVAHRSAAQLNSVSGYWQPDPPAVEGPTALHRNGVGQFNENYFSLNQFYN</sequence>
<accession>Q9S840</accession>
<accession>Q1EBV0</accession>
<accession>Q9SMY0</accession>
<name>SPL2_ARATH</name>
<feature type="chain" id="PRO_0000132723" description="Squamosa promoter-binding-like protein 2">
    <location>
        <begin position="1"/>
        <end position="419"/>
    </location>
</feature>
<feature type="zinc finger region" description="SBP-type" evidence="3">
    <location>
        <begin position="166"/>
        <end position="243"/>
    </location>
</feature>
<feature type="region of interest" description="Disordered" evidence="4">
    <location>
        <begin position="77"/>
        <end position="96"/>
    </location>
</feature>
<feature type="region of interest" description="Disordered" evidence="4">
    <location>
        <begin position="230"/>
        <end position="249"/>
    </location>
</feature>
<feature type="short sequence motif" description="Bipartite nuclear localization signal" evidence="2">
    <location>
        <begin position="226"/>
        <end position="242"/>
    </location>
</feature>
<feature type="binding site" evidence="3">
    <location>
        <position position="169"/>
    </location>
    <ligand>
        <name>Zn(2+)</name>
        <dbReference type="ChEBI" id="CHEBI:29105"/>
        <label>1</label>
    </ligand>
</feature>
<feature type="binding site" evidence="3">
    <location>
        <position position="174"/>
    </location>
    <ligand>
        <name>Zn(2+)</name>
        <dbReference type="ChEBI" id="CHEBI:29105"/>
        <label>1</label>
    </ligand>
</feature>
<feature type="binding site" evidence="3">
    <location>
        <position position="191"/>
    </location>
    <ligand>
        <name>Zn(2+)</name>
        <dbReference type="ChEBI" id="CHEBI:29105"/>
        <label>1</label>
    </ligand>
</feature>
<feature type="binding site" evidence="3">
    <location>
        <position position="194"/>
    </location>
    <ligand>
        <name>Zn(2+)</name>
        <dbReference type="ChEBI" id="CHEBI:29105"/>
        <label>1</label>
    </ligand>
</feature>
<feature type="binding site" evidence="3">
    <location>
        <position position="210"/>
    </location>
    <ligand>
        <name>Zn(2+)</name>
        <dbReference type="ChEBI" id="CHEBI:29105"/>
        <label>2</label>
    </ligand>
</feature>
<feature type="binding site" evidence="3">
    <location>
        <position position="213"/>
    </location>
    <ligand>
        <name>Zn(2+)</name>
        <dbReference type="ChEBI" id="CHEBI:29105"/>
        <label>2</label>
    </ligand>
</feature>
<feature type="binding site" evidence="3">
    <location>
        <position position="217"/>
    </location>
    <ligand>
        <name>Zn(2+)</name>
        <dbReference type="ChEBI" id="CHEBI:29105"/>
        <label>2</label>
    </ligand>
</feature>
<feature type="binding site" evidence="3">
    <location>
        <position position="229"/>
    </location>
    <ligand>
        <name>Zn(2+)</name>
        <dbReference type="ChEBI" id="CHEBI:29105"/>
        <label>2</label>
    </ligand>
</feature>
<feature type="sequence conflict" description="In Ref. 1; CAB56577." evidence="9" ref="1">
    <original>F</original>
    <variation>FDAV</variation>
    <location>
        <position position="50"/>
    </location>
</feature>
<feature type="sequence conflict" description="In Ref. 1; CAB56577." evidence="9" ref="1">
    <original>A</original>
    <variation>G</variation>
    <location>
        <position position="53"/>
    </location>
</feature>
<feature type="sequence conflict" description="In Ref. 1; CAB56577." evidence="9" ref="1">
    <original>A</original>
    <variation>T</variation>
    <location>
        <position position="78"/>
    </location>
</feature>
<feature type="sequence conflict" description="In Ref. 1; CAB56577." evidence="9" ref="1">
    <original>S</original>
    <variation>T</variation>
    <location>
        <position position="106"/>
    </location>
</feature>
<feature type="sequence conflict" description="In Ref. 1; CAB56577." evidence="9" ref="1">
    <original>T</original>
    <variation>S</variation>
    <location>
        <position position="145"/>
    </location>
</feature>
<feature type="sequence conflict" description="In Ref. 1; CAB56577." evidence="9" ref="1">
    <original>I</original>
    <variation>L</variation>
    <location>
        <position position="274"/>
    </location>
</feature>
<feature type="sequence conflict" description="In Ref. 1; CAB56577." evidence="9" ref="1">
    <original>H</original>
    <variation>P</variation>
    <location>
        <position position="280"/>
    </location>
</feature>
<feature type="sequence conflict" description="In Ref. 1; CAB56577." evidence="9" ref="1">
    <original>D</original>
    <variation>NKLF</variation>
    <location>
        <position position="297"/>
    </location>
</feature>
<feature type="sequence conflict" description="In Ref. 1; CAB56577." evidence="9" ref="1">
    <original>N</original>
    <variation>S</variation>
    <location>
        <position position="301"/>
    </location>
</feature>
<feature type="sequence conflict" description="In Ref. 1; CAB56577." evidence="9" ref="1">
    <original>T</original>
    <variation>S</variation>
    <location>
        <position position="312"/>
    </location>
</feature>
<feature type="sequence conflict" description="In Ref. 1; CAB56577." evidence="9" ref="1">
    <original>VAH</original>
    <variation>IAN</variation>
    <location>
        <begin position="371"/>
        <end position="373"/>
    </location>
</feature>
<feature type="sequence conflict" description="In Ref. 1; CAB56577." evidence="9" ref="1">
    <original>N</original>
    <variation>S</variation>
    <location>
        <position position="380"/>
    </location>
</feature>
<feature type="sequence conflict" description="In Ref. 1; CAB56577." evidence="9" ref="1">
    <original>V</original>
    <variation>A</variation>
    <location>
        <position position="404"/>
    </location>
</feature>
<keyword id="KW-0238">DNA-binding</keyword>
<keyword id="KW-0479">Metal-binding</keyword>
<keyword id="KW-0539">Nucleus</keyword>
<keyword id="KW-1185">Reference proteome</keyword>
<keyword id="KW-0804">Transcription</keyword>
<keyword id="KW-0805">Transcription regulation</keyword>
<keyword id="KW-0862">Zinc</keyword>
<keyword id="KW-0863">Zinc-finger</keyword>
<reference key="1">
    <citation type="journal article" date="1999" name="Gene">
        <title>Molecular characterization of the Arabidopsis SBP-box genes.</title>
        <authorList>
            <person name="Cardon G.H."/>
            <person name="Hoehmann S."/>
            <person name="Klein J."/>
            <person name="Nettesheim K."/>
            <person name="Saedler H."/>
            <person name="Huijser P."/>
        </authorList>
    </citation>
    <scope>NUCLEOTIDE SEQUENCE [GENOMIC DNA / MRNA]</scope>
    <scope>DEVELOPMENTAL STAGE</scope>
    <source>
        <strain>cv. Columbia</strain>
        <strain>cv. Landsberg erecta</strain>
        <tissue>Flower</tissue>
    </source>
</reference>
<reference key="2">
    <citation type="journal article" date="1999" name="DNA Res.">
        <title>Structural analysis of Arabidopsis thaliana chromosome 5. IX. Sequence features of the regions of 1,011,550 bp covered by seventeen P1 and TAC clones.</title>
        <authorList>
            <person name="Kaneko T."/>
            <person name="Katoh T."/>
            <person name="Sato S."/>
            <person name="Nakamura Y."/>
            <person name="Asamizu E."/>
            <person name="Kotani H."/>
            <person name="Miyajima N."/>
            <person name="Tabata S."/>
        </authorList>
    </citation>
    <scope>NUCLEOTIDE SEQUENCE [LARGE SCALE GENOMIC DNA]</scope>
    <source>
        <strain>cv. Columbia</strain>
    </source>
</reference>
<reference key="3">
    <citation type="journal article" date="2017" name="Plant J.">
        <title>Araport11: a complete reannotation of the Arabidopsis thaliana reference genome.</title>
        <authorList>
            <person name="Cheng C.Y."/>
            <person name="Krishnakumar V."/>
            <person name="Chan A.P."/>
            <person name="Thibaud-Nissen F."/>
            <person name="Schobel S."/>
            <person name="Town C.D."/>
        </authorList>
    </citation>
    <scope>GENOME REANNOTATION</scope>
    <source>
        <strain>cv. Columbia</strain>
    </source>
</reference>
<reference key="4">
    <citation type="submission" date="2006-06" db="EMBL/GenBank/DDBJ databases">
        <title>Arabidopsis ORF clones.</title>
        <authorList>
            <person name="Shinn P."/>
            <person name="Chen H."/>
            <person name="Kim C.J."/>
            <person name="Quinitio C."/>
            <person name="Ecker J.R."/>
        </authorList>
    </citation>
    <scope>NUCLEOTIDE SEQUENCE [LARGE SCALE MRNA]</scope>
    <source>
        <strain>cv. Columbia</strain>
    </source>
</reference>
<reference key="5">
    <citation type="submission" date="2006-07" db="EMBL/GenBank/DDBJ databases">
        <title>Large-scale analysis of RIKEN Arabidopsis full-length (RAFL) cDNAs.</title>
        <authorList>
            <person name="Totoki Y."/>
            <person name="Seki M."/>
            <person name="Ishida J."/>
            <person name="Nakajima M."/>
            <person name="Enju A."/>
            <person name="Kamiya A."/>
            <person name="Narusaka M."/>
            <person name="Shin-i T."/>
            <person name="Nakagawa M."/>
            <person name="Sakamoto N."/>
            <person name="Oishi K."/>
            <person name="Kohara Y."/>
            <person name="Kobayashi M."/>
            <person name="Toyoda A."/>
            <person name="Sakaki Y."/>
            <person name="Sakurai T."/>
            <person name="Iida K."/>
            <person name="Akiyama K."/>
            <person name="Satou M."/>
            <person name="Toyoda T."/>
            <person name="Konagaya A."/>
            <person name="Carninci P."/>
            <person name="Kawai J."/>
            <person name="Hayashizaki Y."/>
            <person name="Shinozaki K."/>
        </authorList>
    </citation>
    <scope>NUCLEOTIDE SEQUENCE [LARGE SCALE MRNA]</scope>
    <source>
        <strain>cv. Columbia</strain>
    </source>
</reference>
<reference key="6">
    <citation type="journal article" date="2002" name="Cell">
        <title>Prediction of plant microRNA targets.</title>
        <authorList>
            <person name="Rhoades M.W."/>
            <person name="Reinhart B.J."/>
            <person name="Lim L.P."/>
            <person name="Burge C.B."/>
            <person name="Bartel B."/>
            <person name="Bartel D.P."/>
        </authorList>
    </citation>
    <scope>INDUCTION</scope>
</reference>
<reference key="7">
    <citation type="journal article" date="2003" name="Development">
        <title>Dissection of floral induction pathways using global expression analysis.</title>
        <authorList>
            <person name="Schmid M."/>
            <person name="Uhlenhaut N.H."/>
            <person name="Godard F."/>
            <person name="Demar M."/>
            <person name="Bressan R."/>
            <person name="Weigel D."/>
            <person name="Lohmann J.U."/>
        </authorList>
    </citation>
    <scope>DEVELOPMENTAL STAGE</scope>
</reference>
<reference key="8">
    <citation type="journal article" date="2003" name="Dev. Cell">
        <title>P1/HC-Pro, a viral suppressor of RNA silencing, interferes with Arabidopsis development and miRNA function.</title>
        <authorList>
            <person name="Kasschau K.D."/>
            <person name="Xie Z."/>
            <person name="Allen E."/>
            <person name="Llave C."/>
            <person name="Chapman E.J."/>
            <person name="Krizan K.A."/>
            <person name="Carrington J.C."/>
        </authorList>
    </citation>
    <scope>INDUCTION</scope>
</reference>
<organism>
    <name type="scientific">Arabidopsis thaliana</name>
    <name type="common">Mouse-ear cress</name>
    <dbReference type="NCBI Taxonomy" id="3702"/>
    <lineage>
        <taxon>Eukaryota</taxon>
        <taxon>Viridiplantae</taxon>
        <taxon>Streptophyta</taxon>
        <taxon>Embryophyta</taxon>
        <taxon>Tracheophyta</taxon>
        <taxon>Spermatophyta</taxon>
        <taxon>Magnoliopsida</taxon>
        <taxon>eudicotyledons</taxon>
        <taxon>Gunneridae</taxon>
        <taxon>Pentapetalae</taxon>
        <taxon>rosids</taxon>
        <taxon>malvids</taxon>
        <taxon>Brassicales</taxon>
        <taxon>Brassicaceae</taxon>
        <taxon>Camelineae</taxon>
        <taxon>Arabidopsis</taxon>
    </lineage>
</organism>